<comment type="function">
    <text evidence="1">Can catalyze the hydrolysis of ATP in the presence of single-stranded DNA, the ATP-dependent uptake of single-stranded DNA by duplex DNA, and the ATP-dependent hybridization of homologous single-stranded DNAs. It interacts with LexA causing its activation and leading to its autocatalytic cleavage.</text>
</comment>
<comment type="subcellular location">
    <subcellularLocation>
        <location evidence="1">Cytoplasm</location>
    </subcellularLocation>
</comment>
<comment type="similarity">
    <text evidence="1">Belongs to the RecA family.</text>
</comment>
<organism>
    <name type="scientific">Mycobacterium avium (strain 104)</name>
    <dbReference type="NCBI Taxonomy" id="243243"/>
    <lineage>
        <taxon>Bacteria</taxon>
        <taxon>Bacillati</taxon>
        <taxon>Actinomycetota</taxon>
        <taxon>Actinomycetes</taxon>
        <taxon>Mycobacteriales</taxon>
        <taxon>Mycobacteriaceae</taxon>
        <taxon>Mycobacterium</taxon>
        <taxon>Mycobacterium avium complex (MAC)</taxon>
    </lineage>
</organism>
<dbReference type="EMBL" id="CP000479">
    <property type="protein sequence ID" value="ABK66363.1"/>
    <property type="molecule type" value="Genomic_DNA"/>
</dbReference>
<dbReference type="RefSeq" id="WP_003875210.1">
    <property type="nucleotide sequence ID" value="NC_008595.1"/>
</dbReference>
<dbReference type="SMR" id="A0QIR6"/>
<dbReference type="GeneID" id="75271015"/>
<dbReference type="KEGG" id="mav:MAV_3627"/>
<dbReference type="HOGENOM" id="CLU_040469_3_2_11"/>
<dbReference type="Proteomes" id="UP000001574">
    <property type="component" value="Chromosome"/>
</dbReference>
<dbReference type="GO" id="GO:0005829">
    <property type="term" value="C:cytosol"/>
    <property type="evidence" value="ECO:0007669"/>
    <property type="project" value="TreeGrafter"/>
</dbReference>
<dbReference type="GO" id="GO:0005524">
    <property type="term" value="F:ATP binding"/>
    <property type="evidence" value="ECO:0007669"/>
    <property type="project" value="UniProtKB-UniRule"/>
</dbReference>
<dbReference type="GO" id="GO:0016887">
    <property type="term" value="F:ATP hydrolysis activity"/>
    <property type="evidence" value="ECO:0007669"/>
    <property type="project" value="InterPro"/>
</dbReference>
<dbReference type="GO" id="GO:0140664">
    <property type="term" value="F:ATP-dependent DNA damage sensor activity"/>
    <property type="evidence" value="ECO:0007669"/>
    <property type="project" value="InterPro"/>
</dbReference>
<dbReference type="GO" id="GO:0003684">
    <property type="term" value="F:damaged DNA binding"/>
    <property type="evidence" value="ECO:0007669"/>
    <property type="project" value="UniProtKB-UniRule"/>
</dbReference>
<dbReference type="GO" id="GO:0003697">
    <property type="term" value="F:single-stranded DNA binding"/>
    <property type="evidence" value="ECO:0007669"/>
    <property type="project" value="UniProtKB-UniRule"/>
</dbReference>
<dbReference type="GO" id="GO:0006310">
    <property type="term" value="P:DNA recombination"/>
    <property type="evidence" value="ECO:0007669"/>
    <property type="project" value="UniProtKB-UniRule"/>
</dbReference>
<dbReference type="GO" id="GO:0006281">
    <property type="term" value="P:DNA repair"/>
    <property type="evidence" value="ECO:0007669"/>
    <property type="project" value="UniProtKB-UniRule"/>
</dbReference>
<dbReference type="GO" id="GO:0009432">
    <property type="term" value="P:SOS response"/>
    <property type="evidence" value="ECO:0007669"/>
    <property type="project" value="UniProtKB-UniRule"/>
</dbReference>
<dbReference type="CDD" id="cd00983">
    <property type="entry name" value="RecA"/>
    <property type="match status" value="1"/>
</dbReference>
<dbReference type="FunFam" id="3.40.50.300:FF:002436">
    <property type="entry name" value="Protein RecA"/>
    <property type="match status" value="1"/>
</dbReference>
<dbReference type="Gene3D" id="3.40.50.300">
    <property type="entry name" value="P-loop containing nucleotide triphosphate hydrolases"/>
    <property type="match status" value="1"/>
</dbReference>
<dbReference type="HAMAP" id="MF_00268">
    <property type="entry name" value="RecA"/>
    <property type="match status" value="1"/>
</dbReference>
<dbReference type="InterPro" id="IPR003593">
    <property type="entry name" value="AAA+_ATPase"/>
</dbReference>
<dbReference type="InterPro" id="IPR013765">
    <property type="entry name" value="DNA_recomb/repair_RecA"/>
</dbReference>
<dbReference type="InterPro" id="IPR020584">
    <property type="entry name" value="DNA_recomb/repair_RecA_CS"/>
</dbReference>
<dbReference type="InterPro" id="IPR027417">
    <property type="entry name" value="P-loop_NTPase"/>
</dbReference>
<dbReference type="InterPro" id="IPR049261">
    <property type="entry name" value="RecA-like_C"/>
</dbReference>
<dbReference type="InterPro" id="IPR049428">
    <property type="entry name" value="RecA-like_N"/>
</dbReference>
<dbReference type="InterPro" id="IPR020588">
    <property type="entry name" value="RecA_ATP-bd"/>
</dbReference>
<dbReference type="InterPro" id="IPR023400">
    <property type="entry name" value="RecA_C_sf"/>
</dbReference>
<dbReference type="InterPro" id="IPR020587">
    <property type="entry name" value="RecA_monomer-monomer_interface"/>
</dbReference>
<dbReference type="NCBIfam" id="TIGR02012">
    <property type="entry name" value="tigrfam_recA"/>
    <property type="match status" value="1"/>
</dbReference>
<dbReference type="PANTHER" id="PTHR45900:SF1">
    <property type="entry name" value="MITOCHONDRIAL DNA REPAIR PROTEIN RECA HOMOLOG-RELATED"/>
    <property type="match status" value="1"/>
</dbReference>
<dbReference type="PANTHER" id="PTHR45900">
    <property type="entry name" value="RECA"/>
    <property type="match status" value="1"/>
</dbReference>
<dbReference type="Pfam" id="PF00154">
    <property type="entry name" value="RecA"/>
    <property type="match status" value="1"/>
</dbReference>
<dbReference type="Pfam" id="PF21096">
    <property type="entry name" value="RecA_C"/>
    <property type="match status" value="1"/>
</dbReference>
<dbReference type="PRINTS" id="PR00142">
    <property type="entry name" value="RECA"/>
</dbReference>
<dbReference type="SMART" id="SM00382">
    <property type="entry name" value="AAA"/>
    <property type="match status" value="1"/>
</dbReference>
<dbReference type="SUPFAM" id="SSF52540">
    <property type="entry name" value="P-loop containing nucleoside triphosphate hydrolases"/>
    <property type="match status" value="1"/>
</dbReference>
<dbReference type="SUPFAM" id="SSF54752">
    <property type="entry name" value="RecA protein, C-terminal domain"/>
    <property type="match status" value="1"/>
</dbReference>
<dbReference type="PROSITE" id="PS00321">
    <property type="entry name" value="RECA_1"/>
    <property type="match status" value="1"/>
</dbReference>
<dbReference type="PROSITE" id="PS50162">
    <property type="entry name" value="RECA_2"/>
    <property type="match status" value="1"/>
</dbReference>
<dbReference type="PROSITE" id="PS50163">
    <property type="entry name" value="RECA_3"/>
    <property type="match status" value="1"/>
</dbReference>
<proteinExistence type="inferred from homology"/>
<gene>
    <name evidence="1" type="primary">recA</name>
    <name type="ordered locus">MAV_3627</name>
</gene>
<keyword id="KW-0067">ATP-binding</keyword>
<keyword id="KW-0963">Cytoplasm</keyword>
<keyword id="KW-0227">DNA damage</keyword>
<keyword id="KW-0233">DNA recombination</keyword>
<keyword id="KW-0234">DNA repair</keyword>
<keyword id="KW-0238">DNA-binding</keyword>
<keyword id="KW-0547">Nucleotide-binding</keyword>
<keyword id="KW-0742">SOS response</keyword>
<protein>
    <recommendedName>
        <fullName evidence="1">Protein RecA</fullName>
    </recommendedName>
    <alternativeName>
        <fullName evidence="1">Recombinase A</fullName>
    </alternativeName>
</protein>
<feature type="chain" id="PRO_1000047945" description="Protein RecA">
    <location>
        <begin position="1"/>
        <end position="350"/>
    </location>
</feature>
<feature type="binding site" evidence="1">
    <location>
        <begin position="67"/>
        <end position="74"/>
    </location>
    <ligand>
        <name>ATP</name>
        <dbReference type="ChEBI" id="CHEBI:30616"/>
    </ligand>
</feature>
<evidence type="ECO:0000255" key="1">
    <source>
        <dbReference type="HAMAP-Rule" id="MF_00268"/>
    </source>
</evidence>
<reference key="1">
    <citation type="submission" date="2006-10" db="EMBL/GenBank/DDBJ databases">
        <authorList>
            <person name="Fleischmann R.D."/>
            <person name="Dodson R.J."/>
            <person name="Haft D.H."/>
            <person name="Merkel J.S."/>
            <person name="Nelson W.C."/>
            <person name="Fraser C.M."/>
        </authorList>
    </citation>
    <scope>NUCLEOTIDE SEQUENCE [LARGE SCALE GENOMIC DNA]</scope>
    <source>
        <strain>104</strain>
    </source>
</reference>
<sequence length="350" mass="37465">MTQAPDREKALELAMAQIEKSYGKGSVMRLGDEMRQPISVIPTGSIALDVALGIGGLPRGRVVEIYGPESSGKTTVALHAVANAQAAGGVAAFIDAEHALDPEYAKKLGVDTDSLLVSQPDTGEQALEIADMLIRSGALDILVIDSVAALVPRAELEGEMGDSHVGLQARLMSQALRKMTGALNNSGTTAIFINQLREKIGVMFGSPETTTGGKALKFYASVRMDVRRIETLKDGTNAVGNRTRVKIVKNKVSPPFKQAEFDILYGRGISREGSLIDMGVDQGFIRKSGSWFTYEGEQLGQGKENARTFLMENDEVANEIEKKIKEKLGIGAVVTDDLSDDGVLPAPVDF</sequence>
<accession>A0QIR6</accession>
<name>RECA_MYCA1</name>